<reference key="1">
    <citation type="journal article" date="2000" name="Am. J. Bot.">
        <title>Utility of 17 chloroplast genes for inferring the phylogeny of the basal angiosperms.</title>
        <authorList>
            <person name="Graham S.W."/>
            <person name="Olmstead R.G."/>
        </authorList>
    </citation>
    <scope>NUCLEOTIDE SEQUENCE [GENOMIC DNA]</scope>
</reference>
<reference key="2">
    <citation type="journal article" date="2003" name="Mol. Biol. Evol.">
        <title>Analysis of the Amborella trichopoda chloroplast genome sequence suggests that Amborella is not a basal angiosperm.</title>
        <authorList>
            <person name="Goremykin V.V."/>
            <person name="Hirsch-Ernst K.I."/>
            <person name="Wolfl S."/>
            <person name="Hellwig F.H."/>
        </authorList>
    </citation>
    <scope>NUCLEOTIDE SEQUENCE [LARGE SCALE GENOMIC DNA]</scope>
</reference>
<keyword id="KW-0150">Chloroplast</keyword>
<keyword id="KW-0472">Membrane</keyword>
<keyword id="KW-0934">Plastid</keyword>
<keyword id="KW-1185">Reference proteome</keyword>
<keyword id="KW-0793">Thylakoid</keyword>
<keyword id="KW-0812">Transmembrane</keyword>
<keyword id="KW-1133">Transmembrane helix</keyword>
<gene>
    <name evidence="1" type="primary">psbN</name>
</gene>
<geneLocation type="chloroplast"/>
<sequence length="43" mass="4636">METATLVAISISGSLVSFTGYALYTAFGQPSQQLRDPFEEHGD</sequence>
<organism>
    <name type="scientific">Amborella trichopoda</name>
    <dbReference type="NCBI Taxonomy" id="13333"/>
    <lineage>
        <taxon>Eukaryota</taxon>
        <taxon>Viridiplantae</taxon>
        <taxon>Streptophyta</taxon>
        <taxon>Embryophyta</taxon>
        <taxon>Tracheophyta</taxon>
        <taxon>Spermatophyta</taxon>
        <taxon>Magnoliopsida</taxon>
        <taxon>Amborellales</taxon>
        <taxon>Amborellaceae</taxon>
        <taxon>Amborella</taxon>
    </lineage>
</organism>
<protein>
    <recommendedName>
        <fullName evidence="1">Protein PsbN</fullName>
    </recommendedName>
</protein>
<feature type="chain" id="PRO_0000207864" description="Protein PsbN">
    <location>
        <begin position="1"/>
        <end position="43"/>
    </location>
</feature>
<feature type="transmembrane region" description="Helical" evidence="1">
    <location>
        <begin position="5"/>
        <end position="27"/>
    </location>
</feature>
<accession>Q9G2I2</accession>
<name>PSBN_AMBTC</name>
<dbReference type="EMBL" id="AF235042">
    <property type="protein sequence ID" value="AAG44372.1"/>
    <property type="molecule type" value="Genomic_DNA"/>
</dbReference>
<dbReference type="EMBL" id="AJ506156">
    <property type="protein sequence ID" value="CAD45134.1"/>
    <property type="molecule type" value="Genomic_DNA"/>
</dbReference>
<dbReference type="RefSeq" id="NP_904126.1">
    <property type="nucleotide sequence ID" value="NC_005086.1"/>
</dbReference>
<dbReference type="SMR" id="Q9G2I2"/>
<dbReference type="STRING" id="13333.Q9G2I2"/>
<dbReference type="GeneID" id="2546608"/>
<dbReference type="KEGG" id="atr:2546608"/>
<dbReference type="OrthoDB" id="1860403at2759"/>
<dbReference type="Proteomes" id="UP000017836">
    <property type="component" value="Chloroplast"/>
</dbReference>
<dbReference type="GO" id="GO:0009535">
    <property type="term" value="C:chloroplast thylakoid membrane"/>
    <property type="evidence" value="ECO:0007669"/>
    <property type="project" value="UniProtKB-SubCell"/>
</dbReference>
<dbReference type="GO" id="GO:0015979">
    <property type="term" value="P:photosynthesis"/>
    <property type="evidence" value="ECO:0007669"/>
    <property type="project" value="InterPro"/>
</dbReference>
<dbReference type="HAMAP" id="MF_00293">
    <property type="entry name" value="PSII_PsbN"/>
    <property type="match status" value="1"/>
</dbReference>
<dbReference type="InterPro" id="IPR003398">
    <property type="entry name" value="PSII_PsbN"/>
</dbReference>
<dbReference type="PANTHER" id="PTHR35326">
    <property type="entry name" value="PROTEIN PSBN"/>
    <property type="match status" value="1"/>
</dbReference>
<dbReference type="PANTHER" id="PTHR35326:SF3">
    <property type="entry name" value="PROTEIN PSBN"/>
    <property type="match status" value="1"/>
</dbReference>
<dbReference type="Pfam" id="PF02468">
    <property type="entry name" value="PsbN"/>
    <property type="match status" value="1"/>
</dbReference>
<proteinExistence type="inferred from homology"/>
<evidence type="ECO:0000255" key="1">
    <source>
        <dbReference type="HAMAP-Rule" id="MF_00293"/>
    </source>
</evidence>
<comment type="function">
    <text evidence="1">May play a role in photosystem I and II biogenesis.</text>
</comment>
<comment type="subcellular location">
    <subcellularLocation>
        <location evidence="1">Plastid</location>
        <location evidence="1">Chloroplast thylakoid membrane</location>
        <topology evidence="1">Single-pass membrane protein</topology>
    </subcellularLocation>
</comment>
<comment type="similarity">
    <text evidence="1">Belongs to the PsbN family.</text>
</comment>
<comment type="caution">
    <text evidence="1">Originally thought to be a component of PSII; based on experiments in Synechocystis, N.tabacum and barley, and its absence from PSII in T.elongatus and T.vulcanus, this is probably not true.</text>
</comment>